<sequence length="37" mass="4170">MIEVFLFGIVLGLIPITLAGLFVTAYLQYRRGDQLDL</sequence>
<gene>
    <name evidence="1" type="primary">petG</name>
</gene>
<feature type="chain" id="PRO_0000216373" description="Cytochrome b6-f complex subunit 5">
    <location>
        <begin position="1"/>
        <end position="37"/>
    </location>
</feature>
<feature type="transmembrane region" description="Helical" evidence="1">
    <location>
        <begin position="5"/>
        <end position="25"/>
    </location>
</feature>
<dbReference type="EMBL" id="AJ428413">
    <property type="protein sequence ID" value="CAD28740.1"/>
    <property type="molecule type" value="Genomic_DNA"/>
</dbReference>
<dbReference type="RefSeq" id="NP_862773.1">
    <property type="nucleotide sequence ID" value="NC_004993.1"/>
</dbReference>
<dbReference type="SMR" id="Q7HKX6"/>
<dbReference type="GeneID" id="2597998"/>
<dbReference type="GO" id="GO:0009535">
    <property type="term" value="C:chloroplast thylakoid membrane"/>
    <property type="evidence" value="ECO:0007669"/>
    <property type="project" value="UniProtKB-SubCell"/>
</dbReference>
<dbReference type="GO" id="GO:0009512">
    <property type="term" value="C:cytochrome b6f complex"/>
    <property type="evidence" value="ECO:0007669"/>
    <property type="project" value="InterPro"/>
</dbReference>
<dbReference type="GO" id="GO:0045158">
    <property type="term" value="F:electron transporter, transferring electrons within cytochrome b6/f complex of photosystem II activity"/>
    <property type="evidence" value="ECO:0007669"/>
    <property type="project" value="UniProtKB-UniRule"/>
</dbReference>
<dbReference type="GO" id="GO:0017004">
    <property type="term" value="P:cytochrome complex assembly"/>
    <property type="evidence" value="ECO:0007669"/>
    <property type="project" value="UniProtKB-UniRule"/>
</dbReference>
<dbReference type="GO" id="GO:0015979">
    <property type="term" value="P:photosynthesis"/>
    <property type="evidence" value="ECO:0007669"/>
    <property type="project" value="UniProtKB-KW"/>
</dbReference>
<dbReference type="HAMAP" id="MF_00432">
    <property type="entry name" value="Cytb6_f_PetG"/>
    <property type="match status" value="1"/>
</dbReference>
<dbReference type="InterPro" id="IPR003683">
    <property type="entry name" value="Cyt_6/f_cplx_su5"/>
</dbReference>
<dbReference type="InterPro" id="IPR036099">
    <property type="entry name" value="Cyt_6/f_cplx_su5_sf"/>
</dbReference>
<dbReference type="NCBIfam" id="NF001907">
    <property type="entry name" value="PRK00665.1"/>
    <property type="match status" value="1"/>
</dbReference>
<dbReference type="Pfam" id="PF02529">
    <property type="entry name" value="PetG"/>
    <property type="match status" value="1"/>
</dbReference>
<dbReference type="PIRSF" id="PIRSF000034">
    <property type="entry name" value="Cyt_b6-f_V"/>
    <property type="match status" value="1"/>
</dbReference>
<dbReference type="SUPFAM" id="SSF103446">
    <property type="entry name" value="PetG subunit of the cytochrome b6f complex"/>
    <property type="match status" value="1"/>
</dbReference>
<name>PETG_CALFG</name>
<geneLocation type="chloroplast"/>
<protein>
    <recommendedName>
        <fullName evidence="1">Cytochrome b6-f complex subunit 5</fullName>
    </recommendedName>
    <alternativeName>
        <fullName evidence="1">Cytochrome b6-f complex subunit PetG</fullName>
    </alternativeName>
    <alternativeName>
        <fullName evidence="1">Cytochrome b6-f complex subunit V</fullName>
    </alternativeName>
</protein>
<reference key="1">
    <citation type="journal article" date="2003" name="Plant Syst. Evol.">
        <title>The chloroplast genome of the 'basal' angiosperm Calycanthus fertilis -- structural and phylogenetic analyses.</title>
        <authorList>
            <person name="Goremykin V."/>
            <person name="Hirsch-Ernst K.I."/>
            <person name="Woelfl S."/>
            <person name="Hellwig F.H."/>
        </authorList>
    </citation>
    <scope>NUCLEOTIDE SEQUENCE [LARGE SCALE GENOMIC DNA]</scope>
</reference>
<organism>
    <name type="scientific">Calycanthus floridus var. glaucus</name>
    <name type="common">Eastern sweetshrub</name>
    <name type="synonym">Calycanthus fertilis var. ferax</name>
    <dbReference type="NCBI Taxonomy" id="212734"/>
    <lineage>
        <taxon>Eukaryota</taxon>
        <taxon>Viridiplantae</taxon>
        <taxon>Streptophyta</taxon>
        <taxon>Embryophyta</taxon>
        <taxon>Tracheophyta</taxon>
        <taxon>Spermatophyta</taxon>
        <taxon>Magnoliopsida</taxon>
        <taxon>Magnoliidae</taxon>
        <taxon>Laurales</taxon>
        <taxon>Calycanthaceae</taxon>
        <taxon>Calycanthus</taxon>
    </lineage>
</organism>
<accession>Q7HKX6</accession>
<proteinExistence type="inferred from homology"/>
<evidence type="ECO:0000255" key="1">
    <source>
        <dbReference type="HAMAP-Rule" id="MF_00432"/>
    </source>
</evidence>
<keyword id="KW-0150">Chloroplast</keyword>
<keyword id="KW-0249">Electron transport</keyword>
<keyword id="KW-0472">Membrane</keyword>
<keyword id="KW-0602">Photosynthesis</keyword>
<keyword id="KW-0934">Plastid</keyword>
<keyword id="KW-0793">Thylakoid</keyword>
<keyword id="KW-0812">Transmembrane</keyword>
<keyword id="KW-1133">Transmembrane helix</keyword>
<keyword id="KW-0813">Transport</keyword>
<comment type="function">
    <text evidence="1">Component of the cytochrome b6-f complex, which mediates electron transfer between photosystem II (PSII) and photosystem I (PSI), cyclic electron flow around PSI, and state transitions. PetG is required for either the stability or assembly of the cytochrome b6-f complex.</text>
</comment>
<comment type="subunit">
    <text evidence="1">The 4 large subunits of the cytochrome b6-f complex are cytochrome b6, subunit IV (17 kDa polypeptide, PetD), cytochrome f and the Rieske protein, while the 4 small subunits are PetG, PetL, PetM and PetN. The complex functions as a dimer.</text>
</comment>
<comment type="subcellular location">
    <subcellularLocation>
        <location evidence="1">Plastid</location>
        <location evidence="1">Chloroplast thylakoid membrane</location>
        <topology evidence="1">Single-pass membrane protein</topology>
    </subcellularLocation>
</comment>
<comment type="similarity">
    <text evidence="1">Belongs to the PetG family.</text>
</comment>